<dbReference type="EC" id="1.2.1.41" evidence="1"/>
<dbReference type="EMBL" id="AE013598">
    <property type="protein sequence ID" value="AAW75919.1"/>
    <property type="status" value="ALT_INIT"/>
    <property type="molecule type" value="Genomic_DNA"/>
</dbReference>
<dbReference type="SMR" id="Q5GZF2"/>
<dbReference type="STRING" id="291331.XOO2665"/>
<dbReference type="KEGG" id="xoo:XOO2665"/>
<dbReference type="PATRIC" id="fig|291331.8.peg.2948"/>
<dbReference type="HOGENOM" id="CLU_030231_0_0_6"/>
<dbReference type="UniPathway" id="UPA00098">
    <property type="reaction ID" value="UER00360"/>
</dbReference>
<dbReference type="Proteomes" id="UP000006735">
    <property type="component" value="Chromosome"/>
</dbReference>
<dbReference type="GO" id="GO:0005737">
    <property type="term" value="C:cytoplasm"/>
    <property type="evidence" value="ECO:0007669"/>
    <property type="project" value="UniProtKB-SubCell"/>
</dbReference>
<dbReference type="GO" id="GO:0004350">
    <property type="term" value="F:glutamate-5-semialdehyde dehydrogenase activity"/>
    <property type="evidence" value="ECO:0007669"/>
    <property type="project" value="UniProtKB-UniRule"/>
</dbReference>
<dbReference type="GO" id="GO:0050661">
    <property type="term" value="F:NADP binding"/>
    <property type="evidence" value="ECO:0007669"/>
    <property type="project" value="InterPro"/>
</dbReference>
<dbReference type="GO" id="GO:0055129">
    <property type="term" value="P:L-proline biosynthetic process"/>
    <property type="evidence" value="ECO:0007669"/>
    <property type="project" value="UniProtKB-UniRule"/>
</dbReference>
<dbReference type="CDD" id="cd07079">
    <property type="entry name" value="ALDH_F18-19_ProA-GPR"/>
    <property type="match status" value="1"/>
</dbReference>
<dbReference type="FunFam" id="3.40.309.10:FF:000006">
    <property type="entry name" value="Gamma-glutamyl phosphate reductase"/>
    <property type="match status" value="1"/>
</dbReference>
<dbReference type="Gene3D" id="3.40.605.10">
    <property type="entry name" value="Aldehyde Dehydrogenase, Chain A, domain 1"/>
    <property type="match status" value="1"/>
</dbReference>
<dbReference type="Gene3D" id="3.40.309.10">
    <property type="entry name" value="Aldehyde Dehydrogenase, Chain A, domain 2"/>
    <property type="match status" value="1"/>
</dbReference>
<dbReference type="HAMAP" id="MF_00412">
    <property type="entry name" value="ProA"/>
    <property type="match status" value="1"/>
</dbReference>
<dbReference type="InterPro" id="IPR016161">
    <property type="entry name" value="Ald_DH/histidinol_DH"/>
</dbReference>
<dbReference type="InterPro" id="IPR016163">
    <property type="entry name" value="Ald_DH_C"/>
</dbReference>
<dbReference type="InterPro" id="IPR016162">
    <property type="entry name" value="Ald_DH_N"/>
</dbReference>
<dbReference type="InterPro" id="IPR015590">
    <property type="entry name" value="Aldehyde_DH_dom"/>
</dbReference>
<dbReference type="InterPro" id="IPR020593">
    <property type="entry name" value="G-glutamylP_reductase_CS"/>
</dbReference>
<dbReference type="InterPro" id="IPR012134">
    <property type="entry name" value="Glu-5-SA_DH"/>
</dbReference>
<dbReference type="InterPro" id="IPR000965">
    <property type="entry name" value="GPR_dom"/>
</dbReference>
<dbReference type="NCBIfam" id="NF001221">
    <property type="entry name" value="PRK00197.1"/>
    <property type="match status" value="1"/>
</dbReference>
<dbReference type="NCBIfam" id="TIGR00407">
    <property type="entry name" value="proA"/>
    <property type="match status" value="1"/>
</dbReference>
<dbReference type="PANTHER" id="PTHR11063:SF8">
    <property type="entry name" value="DELTA-1-PYRROLINE-5-CARBOXYLATE SYNTHASE"/>
    <property type="match status" value="1"/>
</dbReference>
<dbReference type="PANTHER" id="PTHR11063">
    <property type="entry name" value="GLUTAMATE SEMIALDEHYDE DEHYDROGENASE"/>
    <property type="match status" value="1"/>
</dbReference>
<dbReference type="Pfam" id="PF00171">
    <property type="entry name" value="Aldedh"/>
    <property type="match status" value="1"/>
</dbReference>
<dbReference type="PIRSF" id="PIRSF000151">
    <property type="entry name" value="GPR"/>
    <property type="match status" value="1"/>
</dbReference>
<dbReference type="SUPFAM" id="SSF53720">
    <property type="entry name" value="ALDH-like"/>
    <property type="match status" value="1"/>
</dbReference>
<dbReference type="PROSITE" id="PS01223">
    <property type="entry name" value="PROA"/>
    <property type="match status" value="1"/>
</dbReference>
<name>PROA_XANOR</name>
<accession>Q5GZF2</accession>
<gene>
    <name evidence="1" type="primary">proA</name>
    <name type="ordered locus">XOO2665</name>
</gene>
<organism>
    <name type="scientific">Xanthomonas oryzae pv. oryzae (strain KACC10331 / KXO85)</name>
    <dbReference type="NCBI Taxonomy" id="291331"/>
    <lineage>
        <taxon>Bacteria</taxon>
        <taxon>Pseudomonadati</taxon>
        <taxon>Pseudomonadota</taxon>
        <taxon>Gammaproteobacteria</taxon>
        <taxon>Lysobacterales</taxon>
        <taxon>Lysobacteraceae</taxon>
        <taxon>Xanthomonas</taxon>
    </lineage>
</organism>
<evidence type="ECO:0000255" key="1">
    <source>
        <dbReference type="HAMAP-Rule" id="MF_00412"/>
    </source>
</evidence>
<evidence type="ECO:0000305" key="2"/>
<comment type="function">
    <text evidence="1">Catalyzes the NADPH-dependent reduction of L-glutamate 5-phosphate into L-glutamate 5-semialdehyde and phosphate. The product spontaneously undergoes cyclization to form 1-pyrroline-5-carboxylate.</text>
</comment>
<comment type="catalytic activity">
    <reaction evidence="1">
        <text>L-glutamate 5-semialdehyde + phosphate + NADP(+) = L-glutamyl 5-phosphate + NADPH + H(+)</text>
        <dbReference type="Rhea" id="RHEA:19541"/>
        <dbReference type="ChEBI" id="CHEBI:15378"/>
        <dbReference type="ChEBI" id="CHEBI:43474"/>
        <dbReference type="ChEBI" id="CHEBI:57783"/>
        <dbReference type="ChEBI" id="CHEBI:58066"/>
        <dbReference type="ChEBI" id="CHEBI:58274"/>
        <dbReference type="ChEBI" id="CHEBI:58349"/>
        <dbReference type="EC" id="1.2.1.41"/>
    </reaction>
</comment>
<comment type="pathway">
    <text evidence="1">Amino-acid biosynthesis; L-proline biosynthesis; L-glutamate 5-semialdehyde from L-glutamate: step 2/2.</text>
</comment>
<comment type="subcellular location">
    <subcellularLocation>
        <location evidence="1">Cytoplasm</location>
    </subcellularLocation>
</comment>
<comment type="similarity">
    <text evidence="1">Belongs to the gamma-glutamyl phosphate reductase family.</text>
</comment>
<comment type="sequence caution" evidence="2">
    <conflict type="erroneous initiation">
        <sequence resource="EMBL-CDS" id="AAW75919"/>
    </conflict>
</comment>
<reference key="1">
    <citation type="journal article" date="2005" name="Nucleic Acids Res.">
        <title>The genome sequence of Xanthomonas oryzae pathovar oryzae KACC10331, the bacterial blight pathogen of rice.</title>
        <authorList>
            <person name="Lee B.-M."/>
            <person name="Park Y.-J."/>
            <person name="Park D.-S."/>
            <person name="Kang H.-W."/>
            <person name="Kim J.-G."/>
            <person name="Song E.-S."/>
            <person name="Park I.-C."/>
            <person name="Yoon U.-H."/>
            <person name="Hahn J.-H."/>
            <person name="Koo B.-S."/>
            <person name="Lee G.-B."/>
            <person name="Kim H."/>
            <person name="Park H.-S."/>
            <person name="Yoon K.-O."/>
            <person name="Kim J.-H."/>
            <person name="Jung C.-H."/>
            <person name="Koh N.-H."/>
            <person name="Seo J.-S."/>
            <person name="Go S.-J."/>
        </authorList>
    </citation>
    <scope>NUCLEOTIDE SEQUENCE [LARGE SCALE GENOMIC DNA]</scope>
    <source>
        <strain>KACC10331 / KXO85</strain>
    </source>
</reference>
<feature type="chain" id="PRO_0000189815" description="Gamma-glutamyl phosphate reductase">
    <location>
        <begin position="1"/>
        <end position="414"/>
    </location>
</feature>
<protein>
    <recommendedName>
        <fullName evidence="1">Gamma-glutamyl phosphate reductase</fullName>
        <shortName evidence="1">GPR</shortName>
        <ecNumber evidence="1">1.2.1.41</ecNumber>
    </recommendedName>
    <alternativeName>
        <fullName evidence="1">Glutamate-5-semialdehyde dehydrogenase</fullName>
    </alternativeName>
    <alternativeName>
        <fullName evidence="1">Glutamyl-gamma-semialdehyde dehydrogenase</fullName>
        <shortName evidence="1">GSA dehydrogenase</shortName>
    </alternativeName>
</protein>
<keyword id="KW-0028">Amino-acid biosynthesis</keyword>
<keyword id="KW-0963">Cytoplasm</keyword>
<keyword id="KW-0521">NADP</keyword>
<keyword id="KW-0560">Oxidoreductase</keyword>
<keyword id="KW-0641">Proline biosynthesis</keyword>
<keyword id="KW-1185">Reference proteome</keyword>
<sequence>MTIKTLALQCRDAAQVVSQLSSQAKCALLQAMAAALEADAGTILAANARDLEAARAKGTASAMLDRLALDDKRLAGIAAALREVALLPDPVGRITREDVRPNGIRVQKVRVPLGVIAMIYEARPNVTADAAALCIKAGNGVILRGGSEAIHSNTAIARALQRALREANVPEAALTLVEDLRRETMLELLQLNDIVDLAIPRGGEGLIRFVAEHARVPVIKHYKGVCHLFVDASAEMELALRLLIDGKATRPSACNSLETLLVHADIAERFLPLAAQALRERKVELRGDAATRAVLPEIAPASDDDYAAEFLDLILAMRVVADLDTALAHIRQYGSDHTEVIATQDPDNAERFVQSLRSAVVMVNASSRFSDGGELGLGAEIGISTTRLHSYGPMGLEALTVERFVVRGEGQVRH</sequence>
<proteinExistence type="inferred from homology"/>